<name>DHB8_HUMAN</name>
<comment type="function">
    <text evidence="5 7 8 14 17">Required for the solubility and assembly of the heterotetramer 3-ketoacyl-[acyl carrier protein] (ACP) reductase functional complex (KAR or KAR1) that forms part of the mitochondrial fatty acid synthase (mtFAS). Alpha-subunit of the KAR complex that acts as a scaffold protein required for the stability of carbonyl reductase type-4 (CBR4, beta-subunit of the KAR complex) and for its 3-ketoacyl-ACP reductase activity, thereby participating in mitochondrial fatty acid biosynthesis. Catalyzes the NAD-dependent conversion of (3R)-3-hydroxyacyl-CoA into 3-ketoacyl-CoA (3-oxoacyl-CoA) with no chain length preference; this enzymatic activity is not needed for the KAR function (PubMed:19571038, PubMed:25203508, PubMed:30508570). Prefers (3R)-3-hydroxyacyl-CoA over (3S)-3-hydroxyacyl-CoA and displays enzymatic activity only in the presence of NAD(+) (PubMed:19571038). Cooperates with enoyl-CoA hydratase 1 in mitochondria, together they constitute an alternative route to the auxiliary enzyme pathways for the breakdown of Z-PUFA (cis polyunsaturated fatty acid) enoyl-esters (Probable) (PubMed:30508570). NAD-dependent 17-beta-hydroxysteroid dehydrogenase with highest activity towards estradiol (17beta-estradiol or E2). Has very low activity towards testosterone and dihydrotestosterone (17beta-hydroxy-5alpha-androstan-3-one). Primarily an oxidative enzyme, it can switch to a reductive mode determined in the appropriate physiologic milieu and catalyze the reduction of estrone (E1) to form biologically active 17beta-estradiol (PubMed:17978863).</text>
</comment>
<comment type="catalytic activity">
    <reaction evidence="7 8">
        <text>a (3R)-3-hydroxyacyl-CoA + NAD(+) = a 3-oxoacyl-CoA + NADH + H(+)</text>
        <dbReference type="Rhea" id="RHEA:32711"/>
        <dbReference type="ChEBI" id="CHEBI:15378"/>
        <dbReference type="ChEBI" id="CHEBI:57319"/>
        <dbReference type="ChEBI" id="CHEBI:57540"/>
        <dbReference type="ChEBI" id="CHEBI:57945"/>
        <dbReference type="ChEBI" id="CHEBI:90726"/>
        <dbReference type="EC" id="1.1.1.n12"/>
    </reaction>
    <physiologicalReaction direction="left-to-right" evidence="7 8">
        <dbReference type="Rhea" id="RHEA:32712"/>
    </physiologicalReaction>
</comment>
<comment type="catalytic activity">
    <reaction evidence="5">
        <text>17beta-estradiol + NAD(+) = estrone + NADH + H(+)</text>
        <dbReference type="Rhea" id="RHEA:24612"/>
        <dbReference type="ChEBI" id="CHEBI:15378"/>
        <dbReference type="ChEBI" id="CHEBI:16469"/>
        <dbReference type="ChEBI" id="CHEBI:17263"/>
        <dbReference type="ChEBI" id="CHEBI:57540"/>
        <dbReference type="ChEBI" id="CHEBI:57945"/>
        <dbReference type="EC" id="1.1.1.62"/>
    </reaction>
    <physiologicalReaction direction="left-to-right" evidence="16">
        <dbReference type="Rhea" id="RHEA:24613"/>
    </physiologicalReaction>
    <physiologicalReaction direction="right-to-left" evidence="16">
        <dbReference type="Rhea" id="RHEA:24614"/>
    </physiologicalReaction>
</comment>
<comment type="catalytic activity">
    <reaction evidence="5">
        <text>testosterone + NAD(+) = androst-4-ene-3,17-dione + NADH + H(+)</text>
        <dbReference type="Rhea" id="RHEA:14929"/>
        <dbReference type="ChEBI" id="CHEBI:15378"/>
        <dbReference type="ChEBI" id="CHEBI:16422"/>
        <dbReference type="ChEBI" id="CHEBI:17347"/>
        <dbReference type="ChEBI" id="CHEBI:57540"/>
        <dbReference type="ChEBI" id="CHEBI:57945"/>
        <dbReference type="EC" id="1.1.1.239"/>
    </reaction>
    <physiologicalReaction direction="left-to-right" evidence="16">
        <dbReference type="Rhea" id="RHEA:14930"/>
    </physiologicalReaction>
</comment>
<comment type="catalytic activity">
    <reaction evidence="5">
        <text>17beta-hydroxy-5alpha-androstan-3-one + NAD(+) = 5alpha-androstan-3,17-dione + NADH + H(+)</text>
        <dbReference type="Rhea" id="RHEA:41992"/>
        <dbReference type="ChEBI" id="CHEBI:15378"/>
        <dbReference type="ChEBI" id="CHEBI:15994"/>
        <dbReference type="ChEBI" id="CHEBI:16330"/>
        <dbReference type="ChEBI" id="CHEBI:57540"/>
        <dbReference type="ChEBI" id="CHEBI:57945"/>
    </reaction>
    <physiologicalReaction direction="left-to-right" evidence="16">
        <dbReference type="Rhea" id="RHEA:41993"/>
    </physiologicalReaction>
</comment>
<comment type="pathway">
    <text evidence="5">Steroid biosynthesis; estrogen biosynthesis.</text>
</comment>
<comment type="pathway">
    <text evidence="8">Lipid metabolism; fatty acid biosynthesis.</text>
</comment>
<comment type="pathway">
    <text evidence="17">Lipid metabolism; mitochondrial fatty acid beta-oxidation.</text>
</comment>
<comment type="subunit">
    <text evidence="8 10">Heterotetramer with CBR4; contains two molecules of HSD17B8 and CBR4.</text>
</comment>
<comment type="subcellular location">
    <subcellularLocation>
        <location evidence="7">Mitochondrion matrix</location>
    </subcellularLocation>
</comment>
<comment type="tissue specificity">
    <text evidence="5 9">Widely expressed, particularly abundant in prostate, placenta and kidney (PubMed:17978863). Expressed at protein level in various tissues like brain, cerebellum, heart, lung, kidney, ovary, testis, adrenals and prostate (PubMed:30508570).</text>
</comment>
<comment type="induction">
    <text evidence="6">Up-regulated by estradiol.</text>
</comment>
<comment type="miscellaneous">
    <text evidence="7">The fatty acyl-CoA dehydrogenase activity is several thousand times higher than the estradiol and testosterone 17beta-hydroxysteroid dehydrogenase conversion.</text>
</comment>
<comment type="similarity">
    <text evidence="15">Belongs to the short-chain dehydrogenases/reductases (SDR) family.</text>
</comment>
<organism>
    <name type="scientific">Homo sapiens</name>
    <name type="common">Human</name>
    <dbReference type="NCBI Taxonomy" id="9606"/>
    <lineage>
        <taxon>Eukaryota</taxon>
        <taxon>Metazoa</taxon>
        <taxon>Chordata</taxon>
        <taxon>Craniata</taxon>
        <taxon>Vertebrata</taxon>
        <taxon>Euteleostomi</taxon>
        <taxon>Mammalia</taxon>
        <taxon>Eutheria</taxon>
        <taxon>Euarchontoglires</taxon>
        <taxon>Primates</taxon>
        <taxon>Haplorrhini</taxon>
        <taxon>Catarrhini</taxon>
        <taxon>Hominidae</taxon>
        <taxon>Homo</taxon>
    </lineage>
</organism>
<evidence type="ECO:0000250" key="1"/>
<evidence type="ECO:0000250" key="2">
    <source>
        <dbReference type="UniProtKB" id="P50171"/>
    </source>
</evidence>
<evidence type="ECO:0000255" key="3">
    <source>
        <dbReference type="PROSITE-ProRule" id="PRU10001"/>
    </source>
</evidence>
<evidence type="ECO:0000269" key="4">
    <source>
    </source>
</evidence>
<evidence type="ECO:0000269" key="5">
    <source>
    </source>
</evidence>
<evidence type="ECO:0000269" key="6">
    <source>
    </source>
</evidence>
<evidence type="ECO:0000269" key="7">
    <source>
    </source>
</evidence>
<evidence type="ECO:0000269" key="8">
    <source>
    </source>
</evidence>
<evidence type="ECO:0000269" key="9">
    <source>
    </source>
</evidence>
<evidence type="ECO:0000269" key="10">
    <source ref="12"/>
</evidence>
<evidence type="ECO:0000303" key="11">
    <source>
    </source>
</evidence>
<evidence type="ECO:0000303" key="12">
    <source>
    </source>
</evidence>
<evidence type="ECO:0000303" key="13">
    <source>
    </source>
</evidence>
<evidence type="ECO:0000303" key="14">
    <source>
    </source>
</evidence>
<evidence type="ECO:0000305" key="15"/>
<evidence type="ECO:0000305" key="16">
    <source>
    </source>
</evidence>
<evidence type="ECO:0000305" key="17">
    <source>
    </source>
</evidence>
<evidence type="ECO:0007744" key="18">
    <source>
        <dbReference type="PDB" id="2PD6"/>
    </source>
</evidence>
<evidence type="ECO:0007744" key="19">
    <source>
        <dbReference type="PDB" id="4CQL"/>
    </source>
</evidence>
<evidence type="ECO:0007744" key="20">
    <source>
        <dbReference type="PDB" id="4CQM"/>
    </source>
</evidence>
<evidence type="ECO:0007829" key="21">
    <source>
        <dbReference type="PDB" id="2PD6"/>
    </source>
</evidence>
<evidence type="ECO:0007829" key="22">
    <source>
        <dbReference type="PDB" id="4CQM"/>
    </source>
</evidence>
<dbReference type="EC" id="1.1.1.n12" evidence="7 8"/>
<dbReference type="EC" id="1.1.1.62" evidence="5"/>
<dbReference type="EC" id="1.1.1.239" evidence="5"/>
<dbReference type="EMBL" id="BT007239">
    <property type="protein sequence ID" value="AAP35903.1"/>
    <property type="molecule type" value="mRNA"/>
</dbReference>
<dbReference type="EMBL" id="AL031228">
    <property type="protein sequence ID" value="CAC38444.1"/>
    <property type="molecule type" value="Genomic_DNA"/>
</dbReference>
<dbReference type="EMBL" id="AL662824">
    <property type="status" value="NOT_ANNOTATED_CDS"/>
    <property type="molecule type" value="Genomic_DNA"/>
</dbReference>
<dbReference type="EMBL" id="AL713971">
    <property type="status" value="NOT_ANNOTATED_CDS"/>
    <property type="molecule type" value="Genomic_DNA"/>
</dbReference>
<dbReference type="EMBL" id="AL645940">
    <property type="status" value="NOT_ANNOTATED_CDS"/>
    <property type="molecule type" value="Genomic_DNA"/>
</dbReference>
<dbReference type="EMBL" id="AL844527">
    <property type="status" value="NOT_ANNOTATED_CDS"/>
    <property type="molecule type" value="Genomic_DNA"/>
</dbReference>
<dbReference type="EMBL" id="CR759786">
    <property type="status" value="NOT_ANNOTATED_CDS"/>
    <property type="molecule type" value="Genomic_DNA"/>
</dbReference>
<dbReference type="EMBL" id="CR759733">
    <property type="status" value="NOT_ANNOTATED_CDS"/>
    <property type="molecule type" value="Genomic_DNA"/>
</dbReference>
<dbReference type="EMBL" id="CR847841">
    <property type="status" value="NOT_ANNOTATED_CDS"/>
    <property type="molecule type" value="Genomic_DNA"/>
</dbReference>
<dbReference type="EMBL" id="CH471081">
    <property type="protein sequence ID" value="EAX03682.1"/>
    <property type="molecule type" value="Genomic_DNA"/>
</dbReference>
<dbReference type="EMBL" id="BC008185">
    <property type="protein sequence ID" value="AAH08185.1"/>
    <property type="molecule type" value="mRNA"/>
</dbReference>
<dbReference type="EMBL" id="D82061">
    <property type="protein sequence ID" value="BAA11529.1"/>
    <property type="molecule type" value="mRNA"/>
</dbReference>
<dbReference type="CCDS" id="CCDS4769.1"/>
<dbReference type="RefSeq" id="NP_055049.1">
    <property type="nucleotide sequence ID" value="NM_014234.5"/>
</dbReference>
<dbReference type="PDB" id="2PD6">
    <property type="method" value="X-ray"/>
    <property type="resolution" value="2.00 A"/>
    <property type="chains" value="A/B/C/D=6-261"/>
</dbReference>
<dbReference type="PDB" id="4CQL">
    <property type="method" value="X-ray"/>
    <property type="resolution" value="2.85 A"/>
    <property type="chains" value="A/D/E/H/I/L/M/P=1-261"/>
</dbReference>
<dbReference type="PDB" id="4CQM">
    <property type="method" value="X-ray"/>
    <property type="resolution" value="2.34 A"/>
    <property type="chains" value="A/D/E/H/I/L/M/P=1-261"/>
</dbReference>
<dbReference type="PDBsum" id="2PD6"/>
<dbReference type="PDBsum" id="4CQL"/>
<dbReference type="PDBsum" id="4CQM"/>
<dbReference type="SMR" id="Q92506"/>
<dbReference type="BioGRID" id="113653">
    <property type="interactions" value="41"/>
</dbReference>
<dbReference type="ComplexPortal" id="CPX-949">
    <property type="entry name" value="Mitochondrial 3-oxoacyl-[acyl-carrier-protein] reductase"/>
</dbReference>
<dbReference type="FunCoup" id="Q92506">
    <property type="interactions" value="237"/>
</dbReference>
<dbReference type="IntAct" id="Q92506">
    <property type="interactions" value="27"/>
</dbReference>
<dbReference type="MINT" id="Q92506"/>
<dbReference type="STRING" id="9606.ENSP00000363794"/>
<dbReference type="DrugBank" id="DB00157">
    <property type="generic name" value="NADH"/>
</dbReference>
<dbReference type="DrugBank" id="DB03461">
    <property type="generic name" value="Nicotinamide adenine dinucleotide phosphate"/>
</dbReference>
<dbReference type="SwissLipids" id="SLP:000001271"/>
<dbReference type="GlyGen" id="Q92506">
    <property type="glycosylation" value="1 site, 1 O-linked glycan (1 site)"/>
</dbReference>
<dbReference type="iPTMnet" id="Q92506"/>
<dbReference type="PhosphoSitePlus" id="Q92506"/>
<dbReference type="SwissPalm" id="Q92506"/>
<dbReference type="BioMuta" id="HSD17B8"/>
<dbReference type="DMDM" id="12643402"/>
<dbReference type="jPOST" id="Q92506"/>
<dbReference type="MassIVE" id="Q92506"/>
<dbReference type="PaxDb" id="9606-ENSP00000363794"/>
<dbReference type="PeptideAtlas" id="Q92506"/>
<dbReference type="ProteomicsDB" id="75276"/>
<dbReference type="Pumba" id="Q92506"/>
<dbReference type="TopDownProteomics" id="Q92506"/>
<dbReference type="Antibodypedia" id="28972">
    <property type="antibodies" value="235 antibodies from 30 providers"/>
</dbReference>
<dbReference type="DNASU" id="7923"/>
<dbReference type="Ensembl" id="ENST00000230236.4">
    <property type="protein sequence ID" value="ENSP00000230236.4"/>
    <property type="gene ID" value="ENSG00000112474.4"/>
</dbReference>
<dbReference type="Ensembl" id="ENST00000374662.4">
    <property type="protein sequence ID" value="ENSP00000363794.3"/>
    <property type="gene ID" value="ENSG00000204228.4"/>
</dbReference>
<dbReference type="Ensembl" id="ENST00000414463.2">
    <property type="protein sequence ID" value="ENSP00000387753.2"/>
    <property type="gene ID" value="ENSG00000228357.2"/>
</dbReference>
<dbReference type="Ensembl" id="ENST00000422433.2">
    <property type="protein sequence ID" value="ENSP00000406488.2"/>
    <property type="gene ID" value="ENSG00000232357.2"/>
</dbReference>
<dbReference type="Ensembl" id="ENST00000427295.2">
    <property type="protein sequence ID" value="ENSP00000403538.2"/>
    <property type="gene ID" value="ENSG00000228712.2"/>
</dbReference>
<dbReference type="Ensembl" id="ENST00000454191.2">
    <property type="protein sequence ID" value="ENSP00000413950.2"/>
    <property type="gene ID" value="ENSG00000225312.2"/>
</dbReference>
<dbReference type="GeneID" id="7923"/>
<dbReference type="KEGG" id="hsa:7923"/>
<dbReference type="MANE-Select" id="ENST00000374662.4">
    <property type="protein sequence ID" value="ENSP00000363794.3"/>
    <property type="RefSeq nucleotide sequence ID" value="NM_014234.5"/>
    <property type="RefSeq protein sequence ID" value="NP_055049.1"/>
</dbReference>
<dbReference type="UCSC" id="uc003odi.3">
    <property type="organism name" value="human"/>
</dbReference>
<dbReference type="AGR" id="HGNC:3554"/>
<dbReference type="CTD" id="7923"/>
<dbReference type="DisGeNET" id="7923"/>
<dbReference type="GeneCards" id="HSD17B8"/>
<dbReference type="HGNC" id="HGNC:3554">
    <property type="gene designation" value="HSD17B8"/>
</dbReference>
<dbReference type="HPA" id="ENSG00000204228">
    <property type="expression patterns" value="Low tissue specificity"/>
</dbReference>
<dbReference type="MIM" id="601417">
    <property type="type" value="gene"/>
</dbReference>
<dbReference type="neXtProt" id="NX_Q92506"/>
<dbReference type="OpenTargets" id="ENSG00000204228"/>
<dbReference type="PharmGKB" id="PA29484"/>
<dbReference type="VEuPathDB" id="HostDB:ENSG00000204228"/>
<dbReference type="eggNOG" id="KOG1200">
    <property type="taxonomic scope" value="Eukaryota"/>
</dbReference>
<dbReference type="GeneTree" id="ENSGT00940000160668"/>
<dbReference type="HOGENOM" id="CLU_010194_1_3_1"/>
<dbReference type="InParanoid" id="Q92506"/>
<dbReference type="OMA" id="LFGVQCD"/>
<dbReference type="OrthoDB" id="294295at2759"/>
<dbReference type="PAN-GO" id="Q92506">
    <property type="GO annotations" value="4 GO annotations based on evolutionary models"/>
</dbReference>
<dbReference type="PhylomeDB" id="Q92506"/>
<dbReference type="TreeFam" id="TF313099"/>
<dbReference type="BioCyc" id="MetaCyc:HS03575-MONOMER"/>
<dbReference type="BRENDA" id="1.1.1.100">
    <property type="organism ID" value="2681"/>
</dbReference>
<dbReference type="PathwayCommons" id="Q92506"/>
<dbReference type="Reactome" id="R-HSA-75105">
    <property type="pathway name" value="Fatty acyl-CoA biosynthesis"/>
</dbReference>
<dbReference type="SABIO-RK" id="Q92506"/>
<dbReference type="SignaLink" id="Q92506"/>
<dbReference type="UniPathway" id="UPA00094"/>
<dbReference type="UniPathway" id="UPA00660"/>
<dbReference type="UniPathway" id="UPA00769"/>
<dbReference type="BioGRID-ORCS" id="7923">
    <property type="hits" value="12 hits in 1158 CRISPR screens"/>
</dbReference>
<dbReference type="ChiTaRS" id="HSD17B8">
    <property type="organism name" value="human"/>
</dbReference>
<dbReference type="EvolutionaryTrace" id="Q92506"/>
<dbReference type="GeneWiki" id="HSD17B8"/>
<dbReference type="GenomeRNAi" id="7923"/>
<dbReference type="Pharos" id="Q92506">
    <property type="development level" value="Tbio"/>
</dbReference>
<dbReference type="PRO" id="PR:Q92506"/>
<dbReference type="Proteomes" id="UP000005640">
    <property type="component" value="Chromosome 6"/>
</dbReference>
<dbReference type="RNAct" id="Q92506">
    <property type="molecule type" value="protein"/>
</dbReference>
<dbReference type="Bgee" id="ENSG00000112474">
    <property type="expression patterns" value="Expressed in prostate gland and 1 other cell type or tissue"/>
</dbReference>
<dbReference type="ExpressionAtlas" id="Q92506">
    <property type="expression patterns" value="baseline and differential"/>
</dbReference>
<dbReference type="GO" id="GO:0005740">
    <property type="term" value="C:mitochondrial envelope"/>
    <property type="evidence" value="ECO:0007669"/>
    <property type="project" value="Ensembl"/>
</dbReference>
<dbReference type="GO" id="GO:0005759">
    <property type="term" value="C:mitochondrial matrix"/>
    <property type="evidence" value="ECO:0000314"/>
    <property type="project" value="UniProtKB"/>
</dbReference>
<dbReference type="GO" id="GO:0005739">
    <property type="term" value="C:mitochondrion"/>
    <property type="evidence" value="ECO:0006056"/>
    <property type="project" value="FlyBase"/>
</dbReference>
<dbReference type="GO" id="GO:1990204">
    <property type="term" value="C:oxidoreductase complex"/>
    <property type="evidence" value="ECO:0000314"/>
    <property type="project" value="UniProtKB"/>
</dbReference>
<dbReference type="GO" id="GO:0005886">
    <property type="term" value="C:plasma membrane"/>
    <property type="evidence" value="ECO:0007669"/>
    <property type="project" value="Ensembl"/>
</dbReference>
<dbReference type="GO" id="GO:0106386">
    <property type="term" value="F:(3R)-hydroxyacyl-CoA dehydrogenase (NAD+) activity"/>
    <property type="evidence" value="ECO:0000314"/>
    <property type="project" value="UniProtKB"/>
</dbReference>
<dbReference type="GO" id="GO:0004303">
    <property type="term" value="F:estradiol 17-beta-dehydrogenase [NAD(P)+] activity"/>
    <property type="evidence" value="ECO:0000314"/>
    <property type="project" value="UniProtKB"/>
</dbReference>
<dbReference type="GO" id="GO:0070404">
    <property type="term" value="F:NADH binding"/>
    <property type="evidence" value="ECO:0000314"/>
    <property type="project" value="UniProtKB"/>
</dbReference>
<dbReference type="GO" id="GO:0048038">
    <property type="term" value="F:quinone binding"/>
    <property type="evidence" value="ECO:0000318"/>
    <property type="project" value="GO_Central"/>
</dbReference>
<dbReference type="GO" id="GO:0047035">
    <property type="term" value="F:testosterone dehydrogenase (NAD+) activity"/>
    <property type="evidence" value="ECO:0007669"/>
    <property type="project" value="UniProtKB-EC"/>
</dbReference>
<dbReference type="GO" id="GO:0008209">
    <property type="term" value="P:androgen metabolic process"/>
    <property type="evidence" value="ECO:0007669"/>
    <property type="project" value="Ensembl"/>
</dbReference>
<dbReference type="GO" id="GO:0006703">
    <property type="term" value="P:estrogen biosynthetic process"/>
    <property type="evidence" value="ECO:0000314"/>
    <property type="project" value="UniProtKB"/>
</dbReference>
<dbReference type="GO" id="GO:0006633">
    <property type="term" value="P:fatty acid biosynthetic process"/>
    <property type="evidence" value="ECO:0000315"/>
    <property type="project" value="UniProtKB"/>
</dbReference>
<dbReference type="GO" id="GO:0051290">
    <property type="term" value="P:protein heterotetramerization"/>
    <property type="evidence" value="ECO:0000314"/>
    <property type="project" value="UniProtKB"/>
</dbReference>
<dbReference type="CDD" id="cd05333">
    <property type="entry name" value="BKR_SDR_c"/>
    <property type="match status" value="1"/>
</dbReference>
<dbReference type="FunFam" id="3.40.50.720:FF:000231">
    <property type="entry name" value="Estradiol 17-beta-dehydrogenase 8"/>
    <property type="match status" value="1"/>
</dbReference>
<dbReference type="Gene3D" id="3.40.50.720">
    <property type="entry name" value="NAD(P)-binding Rossmann-like Domain"/>
    <property type="match status" value="1"/>
</dbReference>
<dbReference type="InterPro" id="IPR036291">
    <property type="entry name" value="NAD(P)-bd_dom_sf"/>
</dbReference>
<dbReference type="InterPro" id="IPR020904">
    <property type="entry name" value="Sc_DH/Rdtase_CS"/>
</dbReference>
<dbReference type="InterPro" id="IPR002347">
    <property type="entry name" value="SDR_fam"/>
</dbReference>
<dbReference type="NCBIfam" id="NF009466">
    <property type="entry name" value="PRK12826.1-2"/>
    <property type="match status" value="1"/>
</dbReference>
<dbReference type="PANTHER" id="PTHR42760:SF83">
    <property type="entry name" value="(3R)-3-HYDROXYACYL-COA DEHYDROGENASE"/>
    <property type="match status" value="1"/>
</dbReference>
<dbReference type="PANTHER" id="PTHR42760">
    <property type="entry name" value="SHORT-CHAIN DEHYDROGENASES/REDUCTASES FAMILY MEMBER"/>
    <property type="match status" value="1"/>
</dbReference>
<dbReference type="Pfam" id="PF13561">
    <property type="entry name" value="adh_short_C2"/>
    <property type="match status" value="1"/>
</dbReference>
<dbReference type="PRINTS" id="PR00081">
    <property type="entry name" value="GDHRDH"/>
</dbReference>
<dbReference type="PRINTS" id="PR00080">
    <property type="entry name" value="SDRFAMILY"/>
</dbReference>
<dbReference type="SMART" id="SM00822">
    <property type="entry name" value="PKS_KR"/>
    <property type="match status" value="1"/>
</dbReference>
<dbReference type="SUPFAM" id="SSF51735">
    <property type="entry name" value="NAD(P)-binding Rossmann-fold domains"/>
    <property type="match status" value="1"/>
</dbReference>
<dbReference type="PROSITE" id="PS00061">
    <property type="entry name" value="ADH_SHORT"/>
    <property type="match status" value="1"/>
</dbReference>
<feature type="chain" id="PRO_0000054598" description="(3R)-3-hydroxyacyl-CoA dehydrogenase">
    <location>
        <begin position="1"/>
        <end position="261"/>
    </location>
</feature>
<feature type="active site" description="Proton acceptor" evidence="3">
    <location>
        <position position="169"/>
    </location>
</feature>
<feature type="binding site" evidence="8 10 18 19">
    <location>
        <begin position="15"/>
        <end position="23"/>
    </location>
    <ligand>
        <name>NAD(+)</name>
        <dbReference type="ChEBI" id="CHEBI:57540"/>
    </ligand>
</feature>
<feature type="binding site" evidence="8 10 18 19">
    <location>
        <begin position="42"/>
        <end position="43"/>
    </location>
    <ligand>
        <name>NAD(+)</name>
        <dbReference type="ChEBI" id="CHEBI:57540"/>
    </ligand>
</feature>
<feature type="binding site" evidence="8 10 18 19">
    <location>
        <begin position="74"/>
        <end position="76"/>
    </location>
    <ligand>
        <name>NAD(+)</name>
        <dbReference type="ChEBI" id="CHEBI:57540"/>
    </ligand>
</feature>
<feature type="binding site" evidence="1">
    <location>
        <position position="156"/>
    </location>
    <ligand>
        <name>substrate</name>
    </ligand>
</feature>
<feature type="binding site" evidence="8 10 18 19">
    <location>
        <begin position="169"/>
        <end position="173"/>
    </location>
    <ligand>
        <name>NAD(+)</name>
        <dbReference type="ChEBI" id="CHEBI:57540"/>
    </ligand>
</feature>
<feature type="binding site" evidence="10 18 20">
    <location>
        <begin position="202"/>
        <end position="204"/>
    </location>
    <ligand>
        <name>NAD(+)</name>
        <dbReference type="ChEBI" id="CHEBI:57540"/>
    </ligand>
</feature>
<feature type="modified residue" description="Phosphoserine" evidence="2">
    <location>
        <position position="60"/>
    </location>
</feature>
<feature type="modified residue" description="N6-succinyllysine" evidence="2">
    <location>
        <position position="160"/>
    </location>
</feature>
<feature type="modified residue" description="N6-succinyllysine" evidence="2">
    <location>
        <position position="173"/>
    </location>
</feature>
<feature type="sequence variant" id="VAR_035844" description="In a breast cancer sample; somatic mutation." evidence="4">
    <original>V</original>
    <variation>L</variation>
    <location>
        <position position="158"/>
    </location>
</feature>
<feature type="sequence variant" id="VAR_052316" description="In dbSNP:rs34491699.">
    <original>H</original>
    <variation>R</variation>
    <location>
        <position position="190"/>
    </location>
</feature>
<feature type="mutagenesis site" description="Reduced NADH-dependent reductase activity with acetoacetyl-CoA. Reduced NADH-dependent reductase activity with 9,10-phenanthrene quinone. Increases NADPH-dependent reductase activities. No effect on the ability to restore growth of an OAR1-deficient yeast mutant." evidence="8">
    <original>D</original>
    <variation>A</variation>
    <location>
        <position position="42"/>
    </location>
</feature>
<feature type="mutagenesis site" description="No effect on the ability to restore growth of an OAR1-deficient yeast mutant." evidence="8">
    <original>R</original>
    <variation>E</variation>
    <location>
        <position position="148"/>
    </location>
</feature>
<feature type="mutagenesis site" description="Strongly reduced NADH-dependent reductase activity with acetoacetyl-CoA. Strongly reduced NADH-dependent reductase activity with 9,10-phenanthrene quinone. Decreases NADPH-dependent reductase activity with acetoacetyl-CoA, but increases NADPH-dependent reductase activity with 9,10-phenanthrene quinone. No effect on the ability to restore growth of an OAR1-deficient yeast mutant." evidence="8">
    <original>Y</original>
    <variation>A</variation>
    <location>
        <position position="169"/>
    </location>
</feature>
<feature type="mutagenesis site" description="Abolishes NADH-dependent reductase activity with acetoacetyl-CoA. Strongly reduced NADH-dependent reductase activity with 9,10-phenanthrene quinone. Slightly decreases NADPH-dependent reductase activity with acetoacetyl-CoA, but increases NADPH-dependent reductase activity with 9,10-phenanthrene quinone. No effect on the ability to restore growth of an OAR1-deficient yeast mutant." evidence="8">
    <original>K</original>
    <variation>A</variation>
    <location>
        <position position="173"/>
    </location>
</feature>
<feature type="mutagenesis site" description="No effect on the ability to restore growth of an OAR1-deficient yeast mutant." evidence="8">
    <original>R</original>
    <variation>E</variation>
    <location>
        <position position="189"/>
    </location>
</feature>
<feature type="sequence conflict" description="In Ref. 5; BAA11529." evidence="15" ref="5">
    <original>E</original>
    <variation>R</variation>
    <location>
        <position position="117"/>
    </location>
</feature>
<feature type="sequence conflict" description="In Ref. 5; BAA11529." evidence="15" ref="5">
    <original>R</original>
    <variation>P</variation>
    <location>
        <position position="193"/>
    </location>
</feature>
<feature type="sequence conflict" description="In Ref. 5; BAA11529." evidence="15" ref="5">
    <original>Q</original>
    <variation>K</variation>
    <location>
        <position position="208"/>
    </location>
</feature>
<feature type="sequence conflict" description="In Ref. 5; BAA11529." evidence="15" ref="5">
    <original>Q</original>
    <variation>K</variation>
    <location>
        <position position="212"/>
    </location>
</feature>
<feature type="turn" evidence="22">
    <location>
        <begin position="8"/>
        <end position="11"/>
    </location>
</feature>
<feature type="strand" evidence="21">
    <location>
        <begin position="13"/>
        <end position="17"/>
    </location>
</feature>
<feature type="turn" evidence="21">
    <location>
        <begin position="18"/>
        <end position="20"/>
    </location>
</feature>
<feature type="helix" evidence="21">
    <location>
        <begin position="22"/>
        <end position="33"/>
    </location>
</feature>
<feature type="strand" evidence="21">
    <location>
        <begin position="37"/>
        <end position="44"/>
    </location>
</feature>
<feature type="helix" evidence="21">
    <location>
        <begin position="45"/>
        <end position="53"/>
    </location>
</feature>
<feature type="strand" evidence="21">
    <location>
        <begin position="70"/>
        <end position="73"/>
    </location>
</feature>
<feature type="helix" evidence="21">
    <location>
        <begin position="79"/>
        <end position="93"/>
    </location>
</feature>
<feature type="strand" evidence="21">
    <location>
        <begin position="98"/>
        <end position="102"/>
    </location>
</feature>
<feature type="helix" evidence="21">
    <location>
        <begin position="112"/>
        <end position="114"/>
    </location>
</feature>
<feature type="helix" evidence="21">
    <location>
        <begin position="117"/>
        <end position="127"/>
    </location>
</feature>
<feature type="helix" evidence="21">
    <location>
        <begin position="129"/>
        <end position="145"/>
    </location>
</feature>
<feature type="strand" evidence="21">
    <location>
        <begin position="149"/>
        <end position="154"/>
    </location>
</feature>
<feature type="helix" evidence="21">
    <location>
        <begin position="158"/>
        <end position="161"/>
    </location>
</feature>
<feature type="helix" evidence="21">
    <location>
        <begin position="167"/>
        <end position="187"/>
    </location>
</feature>
<feature type="helix" evidence="21">
    <location>
        <begin position="188"/>
        <end position="190"/>
    </location>
</feature>
<feature type="strand" evidence="21">
    <location>
        <begin position="192"/>
        <end position="199"/>
    </location>
</feature>
<feature type="strand" evidence="22">
    <location>
        <begin position="201"/>
        <end position="204"/>
    </location>
</feature>
<feature type="turn" evidence="21">
    <location>
        <begin position="207"/>
        <end position="209"/>
    </location>
</feature>
<feature type="helix" evidence="21">
    <location>
        <begin position="212"/>
        <end position="216"/>
    </location>
</feature>
<feature type="helix" evidence="21">
    <location>
        <begin position="219"/>
        <end position="221"/>
    </location>
</feature>
<feature type="helix" evidence="21">
    <location>
        <begin position="230"/>
        <end position="241"/>
    </location>
</feature>
<feature type="helix" evidence="21">
    <location>
        <begin position="243"/>
        <end position="245"/>
    </location>
</feature>
<feature type="strand" evidence="21">
    <location>
        <begin position="252"/>
        <end position="256"/>
    </location>
</feature>
<feature type="turn" evidence="22">
    <location>
        <begin position="257"/>
        <end position="260"/>
    </location>
</feature>
<keyword id="KW-0002">3D-structure</keyword>
<keyword id="KW-0275">Fatty acid biosynthesis</keyword>
<keyword id="KW-0276">Fatty acid metabolism</keyword>
<keyword id="KW-0444">Lipid biosynthesis</keyword>
<keyword id="KW-0443">Lipid metabolism</keyword>
<keyword id="KW-0496">Mitochondrion</keyword>
<keyword id="KW-0520">NAD</keyword>
<keyword id="KW-0560">Oxidoreductase</keyword>
<keyword id="KW-0597">Phosphoprotein</keyword>
<keyword id="KW-1267">Proteomics identification</keyword>
<keyword id="KW-1185">Reference proteome</keyword>
<keyword id="KW-0752">Steroid biosynthesis</keyword>
<accession>Q92506</accession>
<accession>A6NLX7</accession>
<accession>Q5STP7</accession>
<accession>Q9UIQ1</accession>
<gene>
    <name type="primary">HSD17B8</name>
    <name type="synonym">FABGL</name>
    <name type="synonym">HKE6</name>
    <name type="synonym">RING2</name>
    <name type="synonym">SDR30C1</name>
</gene>
<protein>
    <recommendedName>
        <fullName>(3R)-3-hydroxyacyl-CoA dehydrogenase</fullName>
        <ecNumber evidence="7 8">1.1.1.n12</ecNumber>
    </recommendedName>
    <alternativeName>
        <fullName evidence="11 13">17-beta-hydroxysteroid dehydrogenase 8</fullName>
        <shortName>17-beta-HSD 8</shortName>
        <shortName evidence="13">HSD17B8</shortName>
    </alternativeName>
    <alternativeName>
        <fullName evidence="13">3-ketoacyl-[acyl-carrier-protein] reductase alpha subunit</fullName>
        <shortName evidence="13">KAR alpha subunit</shortName>
    </alternativeName>
    <alternativeName>
        <fullName>3-oxoacyl-[acyl-carrier-protein] reductase</fullName>
    </alternativeName>
    <alternativeName>
        <fullName>Estradiol 17-beta-dehydrogenase 8</fullName>
        <ecNumber evidence="5">1.1.1.62</ecNumber>
    </alternativeName>
    <alternativeName>
        <fullName>Protein Ke6</fullName>
        <shortName evidence="11 12">Ke6</shortName>
    </alternativeName>
    <alternativeName>
        <fullName>Short chain dehydrogenase/reductase family 30C member 1</fullName>
    </alternativeName>
    <alternativeName>
        <fullName>Testosterone 17-beta-dehydrogenase 8</fullName>
        <ecNumber evidence="5">1.1.1.239</ecNumber>
    </alternativeName>
</protein>
<reference key="1">
    <citation type="submission" date="2003-05" db="EMBL/GenBank/DDBJ databases">
        <title>Cloning of human full-length CDSs in BD Creator(TM) system donor vector.</title>
        <authorList>
            <person name="Kalnine N."/>
            <person name="Chen X."/>
            <person name="Rolfs A."/>
            <person name="Halleck A."/>
            <person name="Hines L."/>
            <person name="Eisenstein S."/>
            <person name="Koundinya M."/>
            <person name="Raphael J."/>
            <person name="Moreira D."/>
            <person name="Kelley T."/>
            <person name="LaBaer J."/>
            <person name="Lin Y."/>
            <person name="Phelan M."/>
            <person name="Farmer A."/>
        </authorList>
    </citation>
    <scope>NUCLEOTIDE SEQUENCE [LARGE SCALE MRNA]</scope>
</reference>
<reference key="2">
    <citation type="journal article" date="2003" name="Nature">
        <title>The DNA sequence and analysis of human chromosome 6.</title>
        <authorList>
            <person name="Mungall A.J."/>
            <person name="Palmer S.A."/>
            <person name="Sims S.K."/>
            <person name="Edwards C.A."/>
            <person name="Ashurst J.L."/>
            <person name="Wilming L."/>
            <person name="Jones M.C."/>
            <person name="Horton R."/>
            <person name="Hunt S.E."/>
            <person name="Scott C.E."/>
            <person name="Gilbert J.G.R."/>
            <person name="Clamp M.E."/>
            <person name="Bethel G."/>
            <person name="Milne S."/>
            <person name="Ainscough R."/>
            <person name="Almeida J.P."/>
            <person name="Ambrose K.D."/>
            <person name="Andrews T.D."/>
            <person name="Ashwell R.I.S."/>
            <person name="Babbage A.K."/>
            <person name="Bagguley C.L."/>
            <person name="Bailey J."/>
            <person name="Banerjee R."/>
            <person name="Barker D.J."/>
            <person name="Barlow K.F."/>
            <person name="Bates K."/>
            <person name="Beare D.M."/>
            <person name="Beasley H."/>
            <person name="Beasley O."/>
            <person name="Bird C.P."/>
            <person name="Blakey S.E."/>
            <person name="Bray-Allen S."/>
            <person name="Brook J."/>
            <person name="Brown A.J."/>
            <person name="Brown J.Y."/>
            <person name="Burford D.C."/>
            <person name="Burrill W."/>
            <person name="Burton J."/>
            <person name="Carder C."/>
            <person name="Carter N.P."/>
            <person name="Chapman J.C."/>
            <person name="Clark S.Y."/>
            <person name="Clark G."/>
            <person name="Clee C.M."/>
            <person name="Clegg S."/>
            <person name="Cobley V."/>
            <person name="Collier R.E."/>
            <person name="Collins J.E."/>
            <person name="Colman L.K."/>
            <person name="Corby N.R."/>
            <person name="Coville G.J."/>
            <person name="Culley K.M."/>
            <person name="Dhami P."/>
            <person name="Davies J."/>
            <person name="Dunn M."/>
            <person name="Earthrowl M.E."/>
            <person name="Ellington A.E."/>
            <person name="Evans K.A."/>
            <person name="Faulkner L."/>
            <person name="Francis M.D."/>
            <person name="Frankish A."/>
            <person name="Frankland J."/>
            <person name="French L."/>
            <person name="Garner P."/>
            <person name="Garnett J."/>
            <person name="Ghori M.J."/>
            <person name="Gilby L.M."/>
            <person name="Gillson C.J."/>
            <person name="Glithero R.J."/>
            <person name="Grafham D.V."/>
            <person name="Grant M."/>
            <person name="Gribble S."/>
            <person name="Griffiths C."/>
            <person name="Griffiths M.N.D."/>
            <person name="Hall R."/>
            <person name="Halls K.S."/>
            <person name="Hammond S."/>
            <person name="Harley J.L."/>
            <person name="Hart E.A."/>
            <person name="Heath P.D."/>
            <person name="Heathcott R."/>
            <person name="Holmes S.J."/>
            <person name="Howden P.J."/>
            <person name="Howe K.L."/>
            <person name="Howell G.R."/>
            <person name="Huckle E."/>
            <person name="Humphray S.J."/>
            <person name="Humphries M.D."/>
            <person name="Hunt A.R."/>
            <person name="Johnson C.M."/>
            <person name="Joy A.A."/>
            <person name="Kay M."/>
            <person name="Keenan S.J."/>
            <person name="Kimberley A.M."/>
            <person name="King A."/>
            <person name="Laird G.K."/>
            <person name="Langford C."/>
            <person name="Lawlor S."/>
            <person name="Leongamornlert D.A."/>
            <person name="Leversha M."/>
            <person name="Lloyd C.R."/>
            <person name="Lloyd D.M."/>
            <person name="Loveland J.E."/>
            <person name="Lovell J."/>
            <person name="Martin S."/>
            <person name="Mashreghi-Mohammadi M."/>
            <person name="Maslen G.L."/>
            <person name="Matthews L."/>
            <person name="McCann O.T."/>
            <person name="McLaren S.J."/>
            <person name="McLay K."/>
            <person name="McMurray A."/>
            <person name="Moore M.J.F."/>
            <person name="Mullikin J.C."/>
            <person name="Niblett D."/>
            <person name="Nickerson T."/>
            <person name="Novik K.L."/>
            <person name="Oliver K."/>
            <person name="Overton-Larty E.K."/>
            <person name="Parker A."/>
            <person name="Patel R."/>
            <person name="Pearce A.V."/>
            <person name="Peck A.I."/>
            <person name="Phillimore B.J.C.T."/>
            <person name="Phillips S."/>
            <person name="Plumb R.W."/>
            <person name="Porter K.M."/>
            <person name="Ramsey Y."/>
            <person name="Ranby S.A."/>
            <person name="Rice C.M."/>
            <person name="Ross M.T."/>
            <person name="Searle S.M."/>
            <person name="Sehra H.K."/>
            <person name="Sheridan E."/>
            <person name="Skuce C.D."/>
            <person name="Smith S."/>
            <person name="Smith M."/>
            <person name="Spraggon L."/>
            <person name="Squares S.L."/>
            <person name="Steward C.A."/>
            <person name="Sycamore N."/>
            <person name="Tamlyn-Hall G."/>
            <person name="Tester J."/>
            <person name="Theaker A.J."/>
            <person name="Thomas D.W."/>
            <person name="Thorpe A."/>
            <person name="Tracey A."/>
            <person name="Tromans A."/>
            <person name="Tubby B."/>
            <person name="Wall M."/>
            <person name="Wallis J.M."/>
            <person name="West A.P."/>
            <person name="White S.S."/>
            <person name="Whitehead S.L."/>
            <person name="Whittaker H."/>
            <person name="Wild A."/>
            <person name="Willey D.J."/>
            <person name="Wilmer T.E."/>
            <person name="Wood J.M."/>
            <person name="Wray P.W."/>
            <person name="Wyatt J.C."/>
            <person name="Young L."/>
            <person name="Younger R.M."/>
            <person name="Bentley D.R."/>
            <person name="Coulson A."/>
            <person name="Durbin R.M."/>
            <person name="Hubbard T."/>
            <person name="Sulston J.E."/>
            <person name="Dunham I."/>
            <person name="Rogers J."/>
            <person name="Beck S."/>
        </authorList>
    </citation>
    <scope>NUCLEOTIDE SEQUENCE [LARGE SCALE GENOMIC DNA]</scope>
</reference>
<reference key="3">
    <citation type="submission" date="2005-07" db="EMBL/GenBank/DDBJ databases">
        <authorList>
            <person name="Mural R.J."/>
            <person name="Istrail S."/>
            <person name="Sutton G.G."/>
            <person name="Florea L."/>
            <person name="Halpern A.L."/>
            <person name="Mobarry C.M."/>
            <person name="Lippert R."/>
            <person name="Walenz B."/>
            <person name="Shatkay H."/>
            <person name="Dew I."/>
            <person name="Miller J.R."/>
            <person name="Flanigan M.J."/>
            <person name="Edwards N.J."/>
            <person name="Bolanos R."/>
            <person name="Fasulo D."/>
            <person name="Halldorsson B.V."/>
            <person name="Hannenhalli S."/>
            <person name="Turner R."/>
            <person name="Yooseph S."/>
            <person name="Lu F."/>
            <person name="Nusskern D.R."/>
            <person name="Shue B.C."/>
            <person name="Zheng X.H."/>
            <person name="Zhong F."/>
            <person name="Delcher A.L."/>
            <person name="Huson D.H."/>
            <person name="Kravitz S.A."/>
            <person name="Mouchard L."/>
            <person name="Reinert K."/>
            <person name="Remington K.A."/>
            <person name="Clark A.G."/>
            <person name="Waterman M.S."/>
            <person name="Eichler E.E."/>
            <person name="Adams M.D."/>
            <person name="Hunkapiller M.W."/>
            <person name="Myers E.W."/>
            <person name="Venter J.C."/>
        </authorList>
    </citation>
    <scope>NUCLEOTIDE SEQUENCE [LARGE SCALE GENOMIC DNA]</scope>
</reference>
<reference key="4">
    <citation type="journal article" date="2004" name="Genome Res.">
        <title>The status, quality, and expansion of the NIH full-length cDNA project: the Mammalian Gene Collection (MGC).</title>
        <authorList>
            <consortium name="The MGC Project Team"/>
        </authorList>
    </citation>
    <scope>NUCLEOTIDE SEQUENCE [LARGE SCALE MRNA]</scope>
    <source>
        <tissue>Brain</tissue>
    </source>
</reference>
<reference key="5">
    <citation type="journal article" date="1996" name="Genomics">
        <title>cDNA cloning of the human homologues of the mouse Ke4 and Ke6 genes at the centromeric end of the human MHC region.</title>
        <authorList>
            <person name="Ando A."/>
            <person name="Kikuti Y.Y."/>
            <person name="Shigenari A."/>
            <person name="Kawata H."/>
            <person name="Okamoto N."/>
            <person name="Shiina T."/>
            <person name="Chen L."/>
            <person name="Ikemura T."/>
            <person name="Abe K."/>
            <person name="Kimura M."/>
            <person name="Inoko H."/>
        </authorList>
    </citation>
    <scope>NUCLEOTIDE SEQUENCE [MRNA] OF 3-261</scope>
</reference>
<reference key="6">
    <citation type="journal article" date="2008" name="Mol. Cell. Biochem.">
        <title>Expression in E. coli and tissue distribution of the human homologue of the mouse Ke 6 gene, 17beta-hydroxysteroid dehydrogenase type 8.</title>
        <authorList>
            <person name="Ohno S."/>
            <person name="Nishikawa K."/>
            <person name="Honda Y."/>
            <person name="Nakajin S."/>
        </authorList>
    </citation>
    <scope>FUNCTION</scope>
    <scope>CATALYTIC ACTIVITY</scope>
    <scope>PATHWAY</scope>
    <scope>TISSUE SPECIFICITY</scope>
</reference>
<reference key="7">
    <citation type="journal article" date="2009" name="FASEB J.">
        <title>17beta-Hydroxysteroid dehydrogenase type 8 and carbonyl reductase type 4 assemble as a ketoacyl reductase of human mitochondrial FAS.</title>
        <authorList>
            <person name="Chen Z."/>
            <person name="Kastaniotis A.J."/>
            <person name="Miinalainen I.J."/>
            <person name="Rajaram V."/>
            <person name="Wierenga R.K."/>
            <person name="Hiltunen J.K."/>
        </authorList>
    </citation>
    <scope>FUNCTION</scope>
    <scope>CATALYTIC ACTIVITY</scope>
    <scope>SUBCELLULAR LOCATION</scope>
    <scope>INTERACTION WITH CBR4</scope>
</reference>
<reference key="8">
    <citation type="journal article" date="2009" name="J. Endocrinol.">
        <title>Estradiol induces type 8 17beta-hydroxysteroid dehydrogenase expression: crosstalk between estrogen receptor alpha and C/EBPbeta.</title>
        <authorList>
            <person name="Rotinen M."/>
            <person name="Celay J."/>
            <person name="Alonso M.M."/>
            <person name="Arrazola A."/>
            <person name="Encio I."/>
            <person name="Villar J."/>
        </authorList>
    </citation>
    <scope>INDUCTION BY ESTRADIOL</scope>
</reference>
<reference key="9">
    <citation type="journal article" date="2011" name="BMC Syst. Biol.">
        <title>Initial characterization of the human central proteome.</title>
        <authorList>
            <person name="Burkard T.R."/>
            <person name="Planyavsky M."/>
            <person name="Kaupe I."/>
            <person name="Breitwieser F.P."/>
            <person name="Buerckstuemmer T."/>
            <person name="Bennett K.L."/>
            <person name="Superti-Furga G."/>
            <person name="Colinge J."/>
        </authorList>
    </citation>
    <scope>IDENTIFICATION BY MASS SPECTROMETRY [LARGE SCALE ANALYSIS]</scope>
</reference>
<reference key="10">
    <citation type="journal article" date="2014" name="J. Proteomics">
        <title>An enzyme assisted RP-RPLC approach for in-depth analysis of human liver phosphoproteome.</title>
        <authorList>
            <person name="Bian Y."/>
            <person name="Song C."/>
            <person name="Cheng K."/>
            <person name="Dong M."/>
            <person name="Wang F."/>
            <person name="Huang J."/>
            <person name="Sun D."/>
            <person name="Wang L."/>
            <person name="Ye M."/>
            <person name="Zou H."/>
        </authorList>
    </citation>
    <scope>IDENTIFICATION BY MASS SPECTROMETRY [LARGE SCALE ANALYSIS]</scope>
    <source>
        <tissue>Liver</tissue>
    </source>
</reference>
<reference key="11">
    <citation type="journal article" date="2019" name="Mol. Cell. Endocrinol.">
        <title>17B-hydroxysteroid dehydrogenases as acyl thioester metabolizing enzymes.</title>
        <authorList>
            <person name="Hiltunen J.K."/>
            <person name="Kastaniotis A.J."/>
            <person name="Autio K.J."/>
            <person name="Jiang G."/>
            <person name="Chen Z."/>
            <person name="Glumoff T."/>
        </authorList>
    </citation>
    <scope>FUNCTION</scope>
    <scope>TISSUE SPECIFICITY</scope>
</reference>
<reference key="12">
    <citation type="submission" date="2009-02" db="PDB data bank">
        <title>Structure of human hydroxysteroid dehydrogenase type 8, HSD17B8.</title>
        <authorList>
            <consortium name="Structural genomics consortium (SGC)"/>
        </authorList>
    </citation>
    <scope>X-RAY CRYSTALLOGRAPHY (2.0 ANGSTROMS) OF 6-261 IN COMPLEX WITH NAD</scope>
</reference>
<reference evidence="19 20" key="13">
    <citation type="journal article" date="2014" name="Nat. Commun.">
        <title>Insights into mitochondrial fatty acid synthesis from the structure of heterotetrameric 3-ketoacyl-ACP reductase/3R-hydroxyacyl-CoA dehydrogenase.</title>
        <authorList>
            <person name="Venkatesan R."/>
            <person name="Sah-Teli S.K."/>
            <person name="Awoniyi L.O."/>
            <person name="Jiang G."/>
            <person name="Prus P."/>
            <person name="Kastaniotis A.J."/>
            <person name="Hiltunen J.K."/>
            <person name="Wierenga R.K."/>
            <person name="Chen Z."/>
        </authorList>
    </citation>
    <scope>X-RAY CRYSTALLOGRAPHY (2.34 ANGSTROMS) IN COMPLEX WITH NAD AND CBR4</scope>
    <scope>SUBUNIT</scope>
    <scope>FUNCTION</scope>
    <scope>CATALYTIC ACTIVITY</scope>
    <scope>PATHWAY</scope>
    <scope>MUTAGENESIS OF ASP-42; ARG-148; TYR-169; LYS-173 AND ARG-189</scope>
</reference>
<reference key="14">
    <citation type="journal article" date="2006" name="Science">
        <title>The consensus coding sequences of human breast and colorectal cancers.</title>
        <authorList>
            <person name="Sjoeblom T."/>
            <person name="Jones S."/>
            <person name="Wood L.D."/>
            <person name="Parsons D.W."/>
            <person name="Lin J."/>
            <person name="Barber T.D."/>
            <person name="Mandelker D."/>
            <person name="Leary R.J."/>
            <person name="Ptak J."/>
            <person name="Silliman N."/>
            <person name="Szabo S."/>
            <person name="Buckhaults P."/>
            <person name="Farrell C."/>
            <person name="Meeh P."/>
            <person name="Markowitz S.D."/>
            <person name="Willis J."/>
            <person name="Dawson D."/>
            <person name="Willson J.K.V."/>
            <person name="Gazdar A.F."/>
            <person name="Hartigan J."/>
            <person name="Wu L."/>
            <person name="Liu C."/>
            <person name="Parmigiani G."/>
            <person name="Park B.H."/>
            <person name="Bachman K.E."/>
            <person name="Papadopoulos N."/>
            <person name="Vogelstein B."/>
            <person name="Kinzler K.W."/>
            <person name="Velculescu V.E."/>
        </authorList>
    </citation>
    <scope>VARIANT [LARGE SCALE ANALYSIS] LEU-158</scope>
</reference>
<proteinExistence type="evidence at protein level"/>
<sequence>MASQLQNRLRSALALVTGAGSGIGRAVSVRLAGEGATVAACDLDRAAAQETVRLLGGPGSKEGPPRGNHAAFQADVSEARAARCLLEQVQACFSRPPSVVVSCAGITQDEFLLHMSEDDWDKVIAVNLKGTFLVTQAAAQALVSNGCRGSIINISSIVGKVGNVGQTNYAASKAGVIGLTQTAARELGRHGIRCNSVLPGFIATPMTQKVPQKVVDKITEMIPMGHLGDPEDVADVVAFLASEDSGYITGTSVEVTGGLFM</sequence>